<name>TPIS_SALHS</name>
<accession>B4TCL7</accession>
<comment type="function">
    <text evidence="1">Involved in the gluconeogenesis. Catalyzes stereospecifically the conversion of dihydroxyacetone phosphate (DHAP) to D-glyceraldehyde-3-phosphate (G3P).</text>
</comment>
<comment type="catalytic activity">
    <reaction evidence="1">
        <text>D-glyceraldehyde 3-phosphate = dihydroxyacetone phosphate</text>
        <dbReference type="Rhea" id="RHEA:18585"/>
        <dbReference type="ChEBI" id="CHEBI:57642"/>
        <dbReference type="ChEBI" id="CHEBI:59776"/>
        <dbReference type="EC" id="5.3.1.1"/>
    </reaction>
</comment>
<comment type="pathway">
    <text evidence="1">Carbohydrate biosynthesis; gluconeogenesis.</text>
</comment>
<comment type="pathway">
    <text evidence="1">Carbohydrate degradation; glycolysis; D-glyceraldehyde 3-phosphate from glycerone phosphate: step 1/1.</text>
</comment>
<comment type="subunit">
    <text evidence="1">Homodimer.</text>
</comment>
<comment type="subcellular location">
    <subcellularLocation>
        <location evidence="1">Cytoplasm</location>
    </subcellularLocation>
</comment>
<comment type="similarity">
    <text evidence="1">Belongs to the triosephosphate isomerase family.</text>
</comment>
<evidence type="ECO:0000255" key="1">
    <source>
        <dbReference type="HAMAP-Rule" id="MF_00147"/>
    </source>
</evidence>
<feature type="chain" id="PRO_1000096529" description="Triosephosphate isomerase">
    <location>
        <begin position="1"/>
        <end position="255"/>
    </location>
</feature>
<feature type="active site" description="Electrophile" evidence="1">
    <location>
        <position position="95"/>
    </location>
</feature>
<feature type="active site" description="Proton acceptor" evidence="1">
    <location>
        <position position="167"/>
    </location>
</feature>
<feature type="binding site" evidence="1">
    <location>
        <begin position="9"/>
        <end position="11"/>
    </location>
    <ligand>
        <name>substrate</name>
    </ligand>
</feature>
<feature type="binding site" evidence="1">
    <location>
        <position position="173"/>
    </location>
    <ligand>
        <name>substrate</name>
    </ligand>
</feature>
<feature type="binding site" evidence="1">
    <location>
        <position position="212"/>
    </location>
    <ligand>
        <name>substrate</name>
    </ligand>
</feature>
<feature type="binding site" evidence="1">
    <location>
        <begin position="233"/>
        <end position="234"/>
    </location>
    <ligand>
        <name>substrate</name>
    </ligand>
</feature>
<dbReference type="EC" id="5.3.1.1" evidence="1"/>
<dbReference type="EMBL" id="CP001120">
    <property type="protein sequence ID" value="ACF68065.1"/>
    <property type="molecule type" value="Genomic_DNA"/>
</dbReference>
<dbReference type="RefSeq" id="WP_001216339.1">
    <property type="nucleotide sequence ID" value="NC_011083.1"/>
</dbReference>
<dbReference type="SMR" id="B4TCL7"/>
<dbReference type="KEGG" id="seh:SeHA_C4412"/>
<dbReference type="HOGENOM" id="CLU_024251_2_1_6"/>
<dbReference type="UniPathway" id="UPA00109">
    <property type="reaction ID" value="UER00189"/>
</dbReference>
<dbReference type="UniPathway" id="UPA00138"/>
<dbReference type="Proteomes" id="UP000001866">
    <property type="component" value="Chromosome"/>
</dbReference>
<dbReference type="GO" id="GO:0005829">
    <property type="term" value="C:cytosol"/>
    <property type="evidence" value="ECO:0007669"/>
    <property type="project" value="TreeGrafter"/>
</dbReference>
<dbReference type="GO" id="GO:0004807">
    <property type="term" value="F:triose-phosphate isomerase activity"/>
    <property type="evidence" value="ECO:0007669"/>
    <property type="project" value="UniProtKB-UniRule"/>
</dbReference>
<dbReference type="GO" id="GO:0006094">
    <property type="term" value="P:gluconeogenesis"/>
    <property type="evidence" value="ECO:0007669"/>
    <property type="project" value="UniProtKB-UniRule"/>
</dbReference>
<dbReference type="GO" id="GO:0046166">
    <property type="term" value="P:glyceraldehyde-3-phosphate biosynthetic process"/>
    <property type="evidence" value="ECO:0007669"/>
    <property type="project" value="TreeGrafter"/>
</dbReference>
<dbReference type="GO" id="GO:0019563">
    <property type="term" value="P:glycerol catabolic process"/>
    <property type="evidence" value="ECO:0007669"/>
    <property type="project" value="TreeGrafter"/>
</dbReference>
<dbReference type="GO" id="GO:0006096">
    <property type="term" value="P:glycolytic process"/>
    <property type="evidence" value="ECO:0007669"/>
    <property type="project" value="UniProtKB-UniRule"/>
</dbReference>
<dbReference type="CDD" id="cd00311">
    <property type="entry name" value="TIM"/>
    <property type="match status" value="1"/>
</dbReference>
<dbReference type="FunFam" id="3.20.20.70:FF:000020">
    <property type="entry name" value="Triosephosphate isomerase"/>
    <property type="match status" value="1"/>
</dbReference>
<dbReference type="Gene3D" id="3.20.20.70">
    <property type="entry name" value="Aldolase class I"/>
    <property type="match status" value="1"/>
</dbReference>
<dbReference type="HAMAP" id="MF_00147_B">
    <property type="entry name" value="TIM_B"/>
    <property type="match status" value="1"/>
</dbReference>
<dbReference type="InterPro" id="IPR013785">
    <property type="entry name" value="Aldolase_TIM"/>
</dbReference>
<dbReference type="InterPro" id="IPR035990">
    <property type="entry name" value="TIM_sf"/>
</dbReference>
<dbReference type="InterPro" id="IPR022896">
    <property type="entry name" value="TrioseP_Isoase_bac/euk"/>
</dbReference>
<dbReference type="InterPro" id="IPR000652">
    <property type="entry name" value="Triosephosphate_isomerase"/>
</dbReference>
<dbReference type="InterPro" id="IPR020861">
    <property type="entry name" value="Triosephosphate_isomerase_AS"/>
</dbReference>
<dbReference type="NCBIfam" id="TIGR00419">
    <property type="entry name" value="tim"/>
    <property type="match status" value="1"/>
</dbReference>
<dbReference type="PANTHER" id="PTHR21139">
    <property type="entry name" value="TRIOSEPHOSPHATE ISOMERASE"/>
    <property type="match status" value="1"/>
</dbReference>
<dbReference type="PANTHER" id="PTHR21139:SF42">
    <property type="entry name" value="TRIOSEPHOSPHATE ISOMERASE"/>
    <property type="match status" value="1"/>
</dbReference>
<dbReference type="Pfam" id="PF00121">
    <property type="entry name" value="TIM"/>
    <property type="match status" value="1"/>
</dbReference>
<dbReference type="SUPFAM" id="SSF51351">
    <property type="entry name" value="Triosephosphate isomerase (TIM)"/>
    <property type="match status" value="1"/>
</dbReference>
<dbReference type="PROSITE" id="PS00171">
    <property type="entry name" value="TIM_1"/>
    <property type="match status" value="1"/>
</dbReference>
<dbReference type="PROSITE" id="PS51440">
    <property type="entry name" value="TIM_2"/>
    <property type="match status" value="1"/>
</dbReference>
<protein>
    <recommendedName>
        <fullName evidence="1">Triosephosphate isomerase</fullName>
        <shortName evidence="1">TIM</shortName>
        <shortName evidence="1">TPI</shortName>
        <ecNumber evidence="1">5.3.1.1</ecNumber>
    </recommendedName>
    <alternativeName>
        <fullName evidence="1">Triose-phosphate isomerase</fullName>
    </alternativeName>
</protein>
<organism>
    <name type="scientific">Salmonella heidelberg (strain SL476)</name>
    <dbReference type="NCBI Taxonomy" id="454169"/>
    <lineage>
        <taxon>Bacteria</taxon>
        <taxon>Pseudomonadati</taxon>
        <taxon>Pseudomonadota</taxon>
        <taxon>Gammaproteobacteria</taxon>
        <taxon>Enterobacterales</taxon>
        <taxon>Enterobacteriaceae</taxon>
        <taxon>Salmonella</taxon>
    </lineage>
</organism>
<gene>
    <name evidence="1" type="primary">tpiA</name>
    <name type="ordered locus">SeHA_C4412</name>
</gene>
<sequence>MRHPLVMGNWKLNGSRHMVNELVANLRKELTGVAGCDVAIAPPEMYIDLAKRAAAGSHIMLGAQNVDLNLSGAFTGETSAEMLKDIGAQYIIIGHSERRTYHKESDELIAKKFAVLKEQGLTPVLCIGETEAENEAGKTEEVCARQIDAVLKTQGAAAFEGAVIAYEPVWAIGTGKSATPAQAQAVHKFIRDHIAKADAKIAEQVIIQYGGSVNASNAAELFAQPDIDGALVGGASLKADAFAVIVKAAEAAKQA</sequence>
<proteinExistence type="inferred from homology"/>
<reference key="1">
    <citation type="journal article" date="2011" name="J. Bacteriol.">
        <title>Comparative genomics of 28 Salmonella enterica isolates: evidence for CRISPR-mediated adaptive sublineage evolution.</title>
        <authorList>
            <person name="Fricke W.F."/>
            <person name="Mammel M.K."/>
            <person name="McDermott P.F."/>
            <person name="Tartera C."/>
            <person name="White D.G."/>
            <person name="Leclerc J.E."/>
            <person name="Ravel J."/>
            <person name="Cebula T.A."/>
        </authorList>
    </citation>
    <scope>NUCLEOTIDE SEQUENCE [LARGE SCALE GENOMIC DNA]</scope>
    <source>
        <strain>SL476</strain>
    </source>
</reference>
<keyword id="KW-0963">Cytoplasm</keyword>
<keyword id="KW-0312">Gluconeogenesis</keyword>
<keyword id="KW-0324">Glycolysis</keyword>
<keyword id="KW-0413">Isomerase</keyword>